<accession>A1JHR4</accession>
<evidence type="ECO:0000255" key="1">
    <source>
        <dbReference type="HAMAP-Rule" id="MF_00294"/>
    </source>
</evidence>
<evidence type="ECO:0000305" key="2"/>
<gene>
    <name evidence="1" type="primary">rpmG</name>
    <name type="ordered locus">YE0065</name>
</gene>
<feature type="chain" id="PRO_1000004218" description="Large ribosomal subunit protein bL33">
    <location>
        <begin position="1"/>
        <end position="55"/>
    </location>
</feature>
<proteinExistence type="inferred from homology"/>
<protein>
    <recommendedName>
        <fullName evidence="1">Large ribosomal subunit protein bL33</fullName>
    </recommendedName>
    <alternativeName>
        <fullName evidence="2">50S ribosomal protein L33</fullName>
    </alternativeName>
</protein>
<sequence>MAKGVREKIKLVSSAGTGHFYTTTKNKRTKPEKLELKKFDPVVRQHVIYKEAKIK</sequence>
<reference key="1">
    <citation type="journal article" date="2006" name="PLoS Genet.">
        <title>The complete genome sequence and comparative genome analysis of the high pathogenicity Yersinia enterocolitica strain 8081.</title>
        <authorList>
            <person name="Thomson N.R."/>
            <person name="Howard S."/>
            <person name="Wren B.W."/>
            <person name="Holden M.T.G."/>
            <person name="Crossman L."/>
            <person name="Challis G.L."/>
            <person name="Churcher C."/>
            <person name="Mungall K."/>
            <person name="Brooks K."/>
            <person name="Chillingworth T."/>
            <person name="Feltwell T."/>
            <person name="Abdellah Z."/>
            <person name="Hauser H."/>
            <person name="Jagels K."/>
            <person name="Maddison M."/>
            <person name="Moule S."/>
            <person name="Sanders M."/>
            <person name="Whitehead S."/>
            <person name="Quail M.A."/>
            <person name="Dougan G."/>
            <person name="Parkhill J."/>
            <person name="Prentice M.B."/>
        </authorList>
    </citation>
    <scope>NUCLEOTIDE SEQUENCE [LARGE SCALE GENOMIC DNA]</scope>
    <source>
        <strain>NCTC 13174 / 8081</strain>
    </source>
</reference>
<dbReference type="EMBL" id="AM286415">
    <property type="protein sequence ID" value="CAL10207.1"/>
    <property type="molecule type" value="Genomic_DNA"/>
</dbReference>
<dbReference type="RefSeq" id="WP_004392084.1">
    <property type="nucleotide sequence ID" value="NC_008800.1"/>
</dbReference>
<dbReference type="RefSeq" id="YP_001004459.1">
    <property type="nucleotide sequence ID" value="NC_008800.1"/>
</dbReference>
<dbReference type="SMR" id="A1JHR4"/>
<dbReference type="GeneID" id="97458292"/>
<dbReference type="KEGG" id="yen:YE0065"/>
<dbReference type="PATRIC" id="fig|393305.7.peg.154"/>
<dbReference type="eggNOG" id="COG0267">
    <property type="taxonomic scope" value="Bacteria"/>
</dbReference>
<dbReference type="HOGENOM" id="CLU_190949_1_1_6"/>
<dbReference type="OrthoDB" id="21586at2"/>
<dbReference type="PRO" id="PR:A1JHR4"/>
<dbReference type="Proteomes" id="UP000000642">
    <property type="component" value="Chromosome"/>
</dbReference>
<dbReference type="GO" id="GO:0022625">
    <property type="term" value="C:cytosolic large ribosomal subunit"/>
    <property type="evidence" value="ECO:0007669"/>
    <property type="project" value="TreeGrafter"/>
</dbReference>
<dbReference type="GO" id="GO:0003735">
    <property type="term" value="F:structural constituent of ribosome"/>
    <property type="evidence" value="ECO:0007669"/>
    <property type="project" value="InterPro"/>
</dbReference>
<dbReference type="GO" id="GO:0006412">
    <property type="term" value="P:translation"/>
    <property type="evidence" value="ECO:0007669"/>
    <property type="project" value="UniProtKB-UniRule"/>
</dbReference>
<dbReference type="FunFam" id="2.20.28.120:FF:000001">
    <property type="entry name" value="50S ribosomal protein L33"/>
    <property type="match status" value="1"/>
</dbReference>
<dbReference type="Gene3D" id="2.20.28.120">
    <property type="entry name" value="Ribosomal protein L33"/>
    <property type="match status" value="1"/>
</dbReference>
<dbReference type="HAMAP" id="MF_00294">
    <property type="entry name" value="Ribosomal_bL33"/>
    <property type="match status" value="1"/>
</dbReference>
<dbReference type="InterPro" id="IPR001705">
    <property type="entry name" value="Ribosomal_bL33"/>
</dbReference>
<dbReference type="InterPro" id="IPR018264">
    <property type="entry name" value="Ribosomal_bL33_CS"/>
</dbReference>
<dbReference type="InterPro" id="IPR038584">
    <property type="entry name" value="Ribosomal_bL33_sf"/>
</dbReference>
<dbReference type="InterPro" id="IPR011332">
    <property type="entry name" value="Ribosomal_zn-bd"/>
</dbReference>
<dbReference type="NCBIfam" id="NF001860">
    <property type="entry name" value="PRK00595.1"/>
    <property type="match status" value="1"/>
</dbReference>
<dbReference type="NCBIfam" id="TIGR01023">
    <property type="entry name" value="rpmG_bact"/>
    <property type="match status" value="1"/>
</dbReference>
<dbReference type="PANTHER" id="PTHR15238">
    <property type="entry name" value="54S RIBOSOMAL PROTEIN L39, MITOCHONDRIAL"/>
    <property type="match status" value="1"/>
</dbReference>
<dbReference type="PANTHER" id="PTHR15238:SF1">
    <property type="entry name" value="LARGE RIBOSOMAL SUBUNIT PROTEIN BL33M"/>
    <property type="match status" value="1"/>
</dbReference>
<dbReference type="Pfam" id="PF00471">
    <property type="entry name" value="Ribosomal_L33"/>
    <property type="match status" value="1"/>
</dbReference>
<dbReference type="SUPFAM" id="SSF57829">
    <property type="entry name" value="Zn-binding ribosomal proteins"/>
    <property type="match status" value="1"/>
</dbReference>
<dbReference type="PROSITE" id="PS00582">
    <property type="entry name" value="RIBOSOMAL_L33"/>
    <property type="match status" value="1"/>
</dbReference>
<organism>
    <name type="scientific">Yersinia enterocolitica serotype O:8 / biotype 1B (strain NCTC 13174 / 8081)</name>
    <dbReference type="NCBI Taxonomy" id="393305"/>
    <lineage>
        <taxon>Bacteria</taxon>
        <taxon>Pseudomonadati</taxon>
        <taxon>Pseudomonadota</taxon>
        <taxon>Gammaproteobacteria</taxon>
        <taxon>Enterobacterales</taxon>
        <taxon>Yersiniaceae</taxon>
        <taxon>Yersinia</taxon>
    </lineage>
</organism>
<keyword id="KW-0687">Ribonucleoprotein</keyword>
<keyword id="KW-0689">Ribosomal protein</keyword>
<name>RL33_YERE8</name>
<comment type="similarity">
    <text evidence="1">Belongs to the bacterial ribosomal protein bL33 family.</text>
</comment>